<keyword id="KW-0028">Amino-acid biosynthesis</keyword>
<keyword id="KW-0479">Metal-binding</keyword>
<keyword id="KW-0486">Methionine biosynthesis</keyword>
<keyword id="KW-0489">Methyltransferase</keyword>
<keyword id="KW-1185">Reference proteome</keyword>
<keyword id="KW-0677">Repeat</keyword>
<keyword id="KW-0808">Transferase</keyword>
<keyword id="KW-0862">Zinc</keyword>
<comment type="function">
    <text evidence="1">Catalyzes the transfer of a methyl group from 5-methyltetrahydrofolate to homocysteine resulting in methionine formation.</text>
</comment>
<comment type="catalytic activity">
    <reaction evidence="1">
        <text>5-methyltetrahydropteroyltri-L-glutamate + L-homocysteine = tetrahydropteroyltri-L-glutamate + L-methionine</text>
        <dbReference type="Rhea" id="RHEA:21196"/>
        <dbReference type="ChEBI" id="CHEBI:57844"/>
        <dbReference type="ChEBI" id="CHEBI:58140"/>
        <dbReference type="ChEBI" id="CHEBI:58199"/>
        <dbReference type="ChEBI" id="CHEBI:58207"/>
        <dbReference type="EC" id="2.1.1.14"/>
    </reaction>
</comment>
<comment type="cofactor">
    <cofactor evidence="1">
        <name>Zn(2+)</name>
        <dbReference type="ChEBI" id="CHEBI:29105"/>
    </cofactor>
    <text evidence="1">Binds 1 zinc ion per subunit.</text>
</comment>
<comment type="pathway">
    <text evidence="1">Amino-acid biosynthesis; L-methionine biosynthesis via de novo pathway; L-methionine from L-homocysteine (MetE route): step 1/1.</text>
</comment>
<comment type="similarity">
    <text evidence="1 2">Belongs to the vitamin-B12 independent methionine synthase family.</text>
</comment>
<accession>Q9CG55</accession>
<feature type="chain" id="PRO_0000098634" description="5-methyltetrahydropteroyltriglutamate--homocysteine methyltransferase">
    <location>
        <begin position="1"/>
        <end position="759"/>
    </location>
</feature>
<feature type="active site" description="Proton donor" evidence="1">
    <location>
        <position position="694"/>
    </location>
</feature>
<feature type="binding site" evidence="1">
    <location>
        <begin position="17"/>
        <end position="20"/>
    </location>
    <ligand>
        <name>5-methyltetrahydropteroyltri-L-glutamate</name>
        <dbReference type="ChEBI" id="CHEBI:58207"/>
    </ligand>
</feature>
<feature type="binding site" evidence="1">
    <location>
        <position position="116"/>
    </location>
    <ligand>
        <name>5-methyltetrahydropteroyltri-L-glutamate</name>
        <dbReference type="ChEBI" id="CHEBI:58207"/>
    </ligand>
</feature>
<feature type="binding site" evidence="1">
    <location>
        <begin position="430"/>
        <end position="432"/>
    </location>
    <ligand>
        <name>L-homocysteine</name>
        <dbReference type="ChEBI" id="CHEBI:58199"/>
    </ligand>
</feature>
<feature type="binding site" evidence="1">
    <location>
        <begin position="430"/>
        <end position="432"/>
    </location>
    <ligand>
        <name>L-methionine</name>
        <dbReference type="ChEBI" id="CHEBI:57844"/>
    </ligand>
</feature>
<feature type="binding site" evidence="1">
    <location>
        <position position="483"/>
    </location>
    <ligand>
        <name>L-homocysteine</name>
        <dbReference type="ChEBI" id="CHEBI:58199"/>
    </ligand>
</feature>
<feature type="binding site" evidence="1">
    <location>
        <position position="483"/>
    </location>
    <ligand>
        <name>L-methionine</name>
        <dbReference type="ChEBI" id="CHEBI:57844"/>
    </ligand>
</feature>
<feature type="binding site" evidence="1">
    <location>
        <begin position="514"/>
        <end position="515"/>
    </location>
    <ligand>
        <name>5-methyltetrahydropteroyltri-L-glutamate</name>
        <dbReference type="ChEBI" id="CHEBI:58207"/>
    </ligand>
</feature>
<feature type="binding site" evidence="1">
    <location>
        <position position="560"/>
    </location>
    <ligand>
        <name>5-methyltetrahydropteroyltri-L-glutamate</name>
        <dbReference type="ChEBI" id="CHEBI:58207"/>
    </ligand>
</feature>
<feature type="binding site" evidence="1">
    <location>
        <position position="598"/>
    </location>
    <ligand>
        <name>L-homocysteine</name>
        <dbReference type="ChEBI" id="CHEBI:58199"/>
    </ligand>
</feature>
<feature type="binding site" evidence="1">
    <location>
        <position position="598"/>
    </location>
    <ligand>
        <name>L-methionine</name>
        <dbReference type="ChEBI" id="CHEBI:57844"/>
    </ligand>
</feature>
<feature type="binding site" evidence="1">
    <location>
        <position position="604"/>
    </location>
    <ligand>
        <name>5-methyltetrahydropteroyltri-L-glutamate</name>
        <dbReference type="ChEBI" id="CHEBI:58207"/>
    </ligand>
</feature>
<feature type="binding site" evidence="1">
    <location>
        <position position="641"/>
    </location>
    <ligand>
        <name>Zn(2+)</name>
        <dbReference type="ChEBI" id="CHEBI:29105"/>
        <note>catalytic</note>
    </ligand>
</feature>
<feature type="binding site" evidence="1">
    <location>
        <position position="643"/>
    </location>
    <ligand>
        <name>Zn(2+)</name>
        <dbReference type="ChEBI" id="CHEBI:29105"/>
        <note>catalytic</note>
    </ligand>
</feature>
<feature type="binding site" evidence="1">
    <location>
        <position position="665"/>
    </location>
    <ligand>
        <name>Zn(2+)</name>
        <dbReference type="ChEBI" id="CHEBI:29105"/>
        <note>catalytic</note>
    </ligand>
</feature>
<feature type="binding site" evidence="1">
    <location>
        <position position="726"/>
    </location>
    <ligand>
        <name>Zn(2+)</name>
        <dbReference type="ChEBI" id="CHEBI:29105"/>
        <note>catalytic</note>
    </ligand>
</feature>
<organism>
    <name type="scientific">Lactococcus lactis subsp. lactis (strain IL1403)</name>
    <name type="common">Streptococcus lactis</name>
    <dbReference type="NCBI Taxonomy" id="272623"/>
    <lineage>
        <taxon>Bacteria</taxon>
        <taxon>Bacillati</taxon>
        <taxon>Bacillota</taxon>
        <taxon>Bacilli</taxon>
        <taxon>Lactobacillales</taxon>
        <taxon>Streptococcaceae</taxon>
        <taxon>Lactococcus</taxon>
    </lineage>
</organism>
<sequence>MTMKKSIIAFPRIGSNRELKFALEKYFRKEITEEELQTVAKEIRLENWKSQKEAGIDSPISNDFSFYDQTLDLSIALGAIPGSYKNLELSELDTLFALARGFQDEQNDVKARPMKKWFNTNYHYLVPEINKDTIIKANFSKLLNEYKEAKSAGFETRPTIIGPYTFLVLADYKSGATKDTVLSDVIVAFQTLLKELNQLGVEWLQIEEPALVLDQTEEEKKLFVSIYEELLKSKNNLNILLQTYFGDVRDSYKEIIKLDFDGIGLDFIEGRDSLALIQKYGFPKKKILFAGLVNGKNIWRNNYQKTLELLTALDEVADIVINTSCSLQHVPVTIKNETKLSKEILKHFSFATEKLNEIDEISDIYFNKNTSFLKKNVELFENERVRENSKLKQKLDKLTEKDFTRQPSLVERRASQSQSLNLPVLPTTTIGSFPQTAEVRKVRLQNKRGELRQADYDTFLEEKIKECLKLQEDIGLDVLVHGEFERNDMVEYFGEKLEGYVFTQKAWVQSYGTRCVKPPIVWTDVTRPEAMTVRWSAYAQSQTSKPVKGMLTGPVTILNWSFPREDISLKASTLQLALAVQEEVLDLEKAGIKIIQIDEAALREKLPLRKSDWYKEYLDWAIPAFRLVHSKVKPETQIHTHMCYSEFEDIIPSIDAMDADVISFEASRSELSIIDALKAHHFKTLVGPGVYDIHSPRIPSVKEIQNQLEKILDKLPIEQVWVNPDCGLKTRGNAETIPSLRHLVEATRVLRKEKVVYDK</sequence>
<evidence type="ECO:0000255" key="1">
    <source>
        <dbReference type="HAMAP-Rule" id="MF_00172"/>
    </source>
</evidence>
<evidence type="ECO:0000305" key="2"/>
<name>METE_LACLA</name>
<dbReference type="EC" id="2.1.1.14" evidence="1"/>
<dbReference type="EMBL" id="AE005176">
    <property type="protein sequence ID" value="AAK05353.1"/>
    <property type="molecule type" value="Genomic_DNA"/>
</dbReference>
<dbReference type="PIR" id="G86781">
    <property type="entry name" value="G86781"/>
</dbReference>
<dbReference type="SMR" id="Q9CG55"/>
<dbReference type="PaxDb" id="272623-L0100"/>
<dbReference type="EnsemblBacteria" id="AAK05353">
    <property type="protein sequence ID" value="AAK05353"/>
    <property type="gene ID" value="L0100"/>
</dbReference>
<dbReference type="KEGG" id="lla:L0100"/>
<dbReference type="eggNOG" id="COG0620">
    <property type="taxonomic scope" value="Bacteria"/>
</dbReference>
<dbReference type="HOGENOM" id="CLU_013175_0_0_9"/>
<dbReference type="OrthoDB" id="244285at2"/>
<dbReference type="UniPathway" id="UPA00051">
    <property type="reaction ID" value="UER00082"/>
</dbReference>
<dbReference type="Proteomes" id="UP000002196">
    <property type="component" value="Chromosome"/>
</dbReference>
<dbReference type="GO" id="GO:0003871">
    <property type="term" value="F:5-methyltetrahydropteroyltriglutamate-homocysteine S-methyltransferase activity"/>
    <property type="evidence" value="ECO:0007669"/>
    <property type="project" value="UniProtKB-UniRule"/>
</dbReference>
<dbReference type="GO" id="GO:0008270">
    <property type="term" value="F:zinc ion binding"/>
    <property type="evidence" value="ECO:0007669"/>
    <property type="project" value="InterPro"/>
</dbReference>
<dbReference type="GO" id="GO:0009086">
    <property type="term" value="P:methionine biosynthetic process"/>
    <property type="evidence" value="ECO:0007669"/>
    <property type="project" value="UniProtKB-UniRule"/>
</dbReference>
<dbReference type="GO" id="GO:0032259">
    <property type="term" value="P:methylation"/>
    <property type="evidence" value="ECO:0007669"/>
    <property type="project" value="UniProtKB-KW"/>
</dbReference>
<dbReference type="CDD" id="cd03311">
    <property type="entry name" value="CIMS_C_terminal_like"/>
    <property type="match status" value="1"/>
</dbReference>
<dbReference type="CDD" id="cd03312">
    <property type="entry name" value="CIMS_N_terminal_like"/>
    <property type="match status" value="1"/>
</dbReference>
<dbReference type="Gene3D" id="3.20.20.210">
    <property type="match status" value="2"/>
</dbReference>
<dbReference type="HAMAP" id="MF_00172">
    <property type="entry name" value="Meth_synth"/>
    <property type="match status" value="1"/>
</dbReference>
<dbReference type="InterPro" id="IPR013215">
    <property type="entry name" value="Cbl-indep_Met_Synth_N"/>
</dbReference>
<dbReference type="InterPro" id="IPR006276">
    <property type="entry name" value="Cobalamin-indep_Met_synthase"/>
</dbReference>
<dbReference type="InterPro" id="IPR002629">
    <property type="entry name" value="Met_Synth_C/arc"/>
</dbReference>
<dbReference type="InterPro" id="IPR038071">
    <property type="entry name" value="UROD/MetE-like_sf"/>
</dbReference>
<dbReference type="NCBIfam" id="TIGR01371">
    <property type="entry name" value="met_syn_B12ind"/>
    <property type="match status" value="1"/>
</dbReference>
<dbReference type="NCBIfam" id="NF003556">
    <property type="entry name" value="PRK05222.1"/>
    <property type="match status" value="1"/>
</dbReference>
<dbReference type="PANTHER" id="PTHR30519">
    <property type="entry name" value="5-METHYLTETRAHYDROPTEROYLTRIGLUTAMATE--HOMOCYSTEINE METHYLTRANSFERASE"/>
    <property type="match status" value="1"/>
</dbReference>
<dbReference type="Pfam" id="PF08267">
    <property type="entry name" value="Meth_synt_1"/>
    <property type="match status" value="1"/>
</dbReference>
<dbReference type="Pfam" id="PF01717">
    <property type="entry name" value="Meth_synt_2"/>
    <property type="match status" value="1"/>
</dbReference>
<dbReference type="PIRSF" id="PIRSF000382">
    <property type="entry name" value="MeTrfase_B12_ind"/>
    <property type="match status" value="1"/>
</dbReference>
<dbReference type="SUPFAM" id="SSF51726">
    <property type="entry name" value="UROD/MetE-like"/>
    <property type="match status" value="2"/>
</dbReference>
<gene>
    <name evidence="1" type="primary">metE</name>
    <name type="ordered locus">LL1255</name>
    <name type="ORF">L0100</name>
</gene>
<proteinExistence type="inferred from homology"/>
<protein>
    <recommendedName>
        <fullName evidence="1">5-methyltetrahydropteroyltriglutamate--homocysteine methyltransferase</fullName>
        <ecNumber evidence="1">2.1.1.14</ecNumber>
    </recommendedName>
    <alternativeName>
        <fullName evidence="1">Cobalamin-independent methionine synthase</fullName>
    </alternativeName>
    <alternativeName>
        <fullName evidence="1">Methionine synthase, vitamin-B12 independent isozyme</fullName>
    </alternativeName>
</protein>
<reference key="1">
    <citation type="journal article" date="2001" name="Genome Res.">
        <title>The complete genome sequence of the lactic acid bacterium Lactococcus lactis ssp. lactis IL1403.</title>
        <authorList>
            <person name="Bolotin A."/>
            <person name="Wincker P."/>
            <person name="Mauger S."/>
            <person name="Jaillon O."/>
            <person name="Malarme K."/>
            <person name="Weissenbach J."/>
            <person name="Ehrlich S.D."/>
            <person name="Sorokin A."/>
        </authorList>
    </citation>
    <scope>NUCLEOTIDE SEQUENCE [LARGE SCALE GENOMIC DNA]</scope>
    <source>
        <strain>IL1403</strain>
    </source>
</reference>